<feature type="chain" id="PRO_0000381641" description="Biotin synthase">
    <location>
        <begin position="1"/>
        <end position="338"/>
    </location>
</feature>
<feature type="domain" description="Radical SAM core" evidence="2">
    <location>
        <begin position="46"/>
        <end position="270"/>
    </location>
</feature>
<feature type="binding site" evidence="1">
    <location>
        <position position="61"/>
    </location>
    <ligand>
        <name>[4Fe-4S] cluster</name>
        <dbReference type="ChEBI" id="CHEBI:49883"/>
        <note>4Fe-4S-S-AdoMet</note>
    </ligand>
</feature>
<feature type="binding site" evidence="1">
    <location>
        <position position="65"/>
    </location>
    <ligand>
        <name>[4Fe-4S] cluster</name>
        <dbReference type="ChEBI" id="CHEBI:49883"/>
        <note>4Fe-4S-S-AdoMet</note>
    </ligand>
</feature>
<feature type="binding site" evidence="1">
    <location>
        <position position="68"/>
    </location>
    <ligand>
        <name>[4Fe-4S] cluster</name>
        <dbReference type="ChEBI" id="CHEBI:49883"/>
        <note>4Fe-4S-S-AdoMet</note>
    </ligand>
</feature>
<feature type="binding site" evidence="1">
    <location>
        <position position="105"/>
    </location>
    <ligand>
        <name>[2Fe-2S] cluster</name>
        <dbReference type="ChEBI" id="CHEBI:190135"/>
    </ligand>
</feature>
<feature type="binding site" evidence="1">
    <location>
        <position position="136"/>
    </location>
    <ligand>
        <name>[2Fe-2S] cluster</name>
        <dbReference type="ChEBI" id="CHEBI:190135"/>
    </ligand>
</feature>
<feature type="binding site" evidence="1">
    <location>
        <position position="196"/>
    </location>
    <ligand>
        <name>[2Fe-2S] cluster</name>
        <dbReference type="ChEBI" id="CHEBI:190135"/>
    </ligand>
</feature>
<feature type="binding site" evidence="1">
    <location>
        <position position="274"/>
    </location>
    <ligand>
        <name>[2Fe-2S] cluster</name>
        <dbReference type="ChEBI" id="CHEBI:190135"/>
    </ligand>
</feature>
<gene>
    <name evidence="1" type="primary">bioB</name>
    <name type="ordered locus">Swit_2890</name>
</gene>
<name>BIOB_RHIWR</name>
<protein>
    <recommendedName>
        <fullName evidence="1">Biotin synthase</fullName>
        <ecNumber evidence="1">2.8.1.6</ecNumber>
    </recommendedName>
</protein>
<proteinExistence type="inferred from homology"/>
<sequence>MNAHANPRPAVRSDWTREEIAALFDLPFNDLLWQAQAAHRAAHAANEVQLSTLLSIKTGGCPEDCGYCNQSVHAETGLKATKLMDVRAVLQSAAQARDAGSTRFCMGAAWRNPKDRDMPAIVEMVKGVRQMGMETCMTLGMLTGDQARTLADAGLDYYNHNIDTAPERYDQVITTRTFEDRIETLEHVREAGINVCCGGIVGMGETRADRVGFIHALATLPVHPESVPVNALVPVKGTVLGDMLADTPLAKIDEIEFVRTVAVARITMPASMVRLSAGRESMSDAAQALCFMAGANSIFTGDKLLTTDNAGDDRDAALFARLGVTPMAAECKVELAAE</sequence>
<reference key="1">
    <citation type="journal article" date="2010" name="J. Bacteriol.">
        <title>Genome sequence of the dioxin-mineralizing bacterium Sphingomonas wittichii RW1.</title>
        <authorList>
            <person name="Miller T.R."/>
            <person name="Delcher A.L."/>
            <person name="Salzberg S.L."/>
            <person name="Saunders E."/>
            <person name="Detter J.C."/>
            <person name="Halden R.U."/>
        </authorList>
    </citation>
    <scope>NUCLEOTIDE SEQUENCE [LARGE SCALE GENOMIC DNA]</scope>
    <source>
        <strain>DSM 6014 / CCUG 31198 / JCM 15750 / NBRC 105917 / EY 4224 / RW1</strain>
    </source>
</reference>
<keyword id="KW-0001">2Fe-2S</keyword>
<keyword id="KW-0004">4Fe-4S</keyword>
<keyword id="KW-0093">Biotin biosynthesis</keyword>
<keyword id="KW-0408">Iron</keyword>
<keyword id="KW-0411">Iron-sulfur</keyword>
<keyword id="KW-0479">Metal-binding</keyword>
<keyword id="KW-1185">Reference proteome</keyword>
<keyword id="KW-0949">S-adenosyl-L-methionine</keyword>
<keyword id="KW-0808">Transferase</keyword>
<accession>A5VAC6</accession>
<evidence type="ECO:0000255" key="1">
    <source>
        <dbReference type="HAMAP-Rule" id="MF_01694"/>
    </source>
</evidence>
<evidence type="ECO:0000255" key="2">
    <source>
        <dbReference type="PROSITE-ProRule" id="PRU01266"/>
    </source>
</evidence>
<dbReference type="EC" id="2.8.1.6" evidence="1"/>
<dbReference type="EMBL" id="CP000699">
    <property type="protein sequence ID" value="ABQ69242.1"/>
    <property type="molecule type" value="Genomic_DNA"/>
</dbReference>
<dbReference type="SMR" id="A5VAC6"/>
<dbReference type="STRING" id="392499.Swit_2890"/>
<dbReference type="PaxDb" id="392499-Swit_2890"/>
<dbReference type="KEGG" id="swi:Swit_2890"/>
<dbReference type="eggNOG" id="COG0502">
    <property type="taxonomic scope" value="Bacteria"/>
</dbReference>
<dbReference type="HOGENOM" id="CLU_033172_1_2_5"/>
<dbReference type="OrthoDB" id="9786826at2"/>
<dbReference type="UniPathway" id="UPA00078">
    <property type="reaction ID" value="UER00162"/>
</dbReference>
<dbReference type="Proteomes" id="UP000001989">
    <property type="component" value="Chromosome"/>
</dbReference>
<dbReference type="GO" id="GO:0051537">
    <property type="term" value="F:2 iron, 2 sulfur cluster binding"/>
    <property type="evidence" value="ECO:0007669"/>
    <property type="project" value="UniProtKB-KW"/>
</dbReference>
<dbReference type="GO" id="GO:0051539">
    <property type="term" value="F:4 iron, 4 sulfur cluster binding"/>
    <property type="evidence" value="ECO:0007669"/>
    <property type="project" value="UniProtKB-KW"/>
</dbReference>
<dbReference type="GO" id="GO:0004076">
    <property type="term" value="F:biotin synthase activity"/>
    <property type="evidence" value="ECO:0007669"/>
    <property type="project" value="UniProtKB-UniRule"/>
</dbReference>
<dbReference type="GO" id="GO:0005506">
    <property type="term" value="F:iron ion binding"/>
    <property type="evidence" value="ECO:0007669"/>
    <property type="project" value="UniProtKB-UniRule"/>
</dbReference>
<dbReference type="GO" id="GO:0009102">
    <property type="term" value="P:biotin biosynthetic process"/>
    <property type="evidence" value="ECO:0007669"/>
    <property type="project" value="UniProtKB-UniRule"/>
</dbReference>
<dbReference type="CDD" id="cd01335">
    <property type="entry name" value="Radical_SAM"/>
    <property type="match status" value="1"/>
</dbReference>
<dbReference type="FunFam" id="3.20.20.70:FF:000011">
    <property type="entry name" value="Biotin synthase"/>
    <property type="match status" value="1"/>
</dbReference>
<dbReference type="Gene3D" id="3.20.20.70">
    <property type="entry name" value="Aldolase class I"/>
    <property type="match status" value="1"/>
</dbReference>
<dbReference type="HAMAP" id="MF_01694">
    <property type="entry name" value="BioB"/>
    <property type="match status" value="1"/>
</dbReference>
<dbReference type="InterPro" id="IPR013785">
    <property type="entry name" value="Aldolase_TIM"/>
</dbReference>
<dbReference type="InterPro" id="IPR010722">
    <property type="entry name" value="BATS_dom"/>
</dbReference>
<dbReference type="InterPro" id="IPR002684">
    <property type="entry name" value="Biotin_synth/BioAB"/>
</dbReference>
<dbReference type="InterPro" id="IPR024177">
    <property type="entry name" value="Biotin_synthase"/>
</dbReference>
<dbReference type="InterPro" id="IPR006638">
    <property type="entry name" value="Elp3/MiaA/NifB-like_rSAM"/>
</dbReference>
<dbReference type="InterPro" id="IPR007197">
    <property type="entry name" value="rSAM"/>
</dbReference>
<dbReference type="NCBIfam" id="TIGR00433">
    <property type="entry name" value="bioB"/>
    <property type="match status" value="1"/>
</dbReference>
<dbReference type="PANTHER" id="PTHR22976">
    <property type="entry name" value="BIOTIN SYNTHASE"/>
    <property type="match status" value="1"/>
</dbReference>
<dbReference type="PANTHER" id="PTHR22976:SF2">
    <property type="entry name" value="BIOTIN SYNTHASE, MITOCHONDRIAL"/>
    <property type="match status" value="1"/>
</dbReference>
<dbReference type="Pfam" id="PF06968">
    <property type="entry name" value="BATS"/>
    <property type="match status" value="1"/>
</dbReference>
<dbReference type="Pfam" id="PF04055">
    <property type="entry name" value="Radical_SAM"/>
    <property type="match status" value="1"/>
</dbReference>
<dbReference type="PIRSF" id="PIRSF001619">
    <property type="entry name" value="Biotin_synth"/>
    <property type="match status" value="1"/>
</dbReference>
<dbReference type="SFLD" id="SFLDF00272">
    <property type="entry name" value="biotin_synthase"/>
    <property type="match status" value="1"/>
</dbReference>
<dbReference type="SFLD" id="SFLDG01278">
    <property type="entry name" value="biotin_synthase_like"/>
    <property type="match status" value="1"/>
</dbReference>
<dbReference type="SMART" id="SM00876">
    <property type="entry name" value="BATS"/>
    <property type="match status" value="1"/>
</dbReference>
<dbReference type="SMART" id="SM00729">
    <property type="entry name" value="Elp3"/>
    <property type="match status" value="1"/>
</dbReference>
<dbReference type="SUPFAM" id="SSF102114">
    <property type="entry name" value="Radical SAM enzymes"/>
    <property type="match status" value="1"/>
</dbReference>
<dbReference type="PROSITE" id="PS51918">
    <property type="entry name" value="RADICAL_SAM"/>
    <property type="match status" value="1"/>
</dbReference>
<organism>
    <name type="scientific">Rhizorhabdus wittichii (strain DSM 6014 / CCUG 31198 / JCM 15750 / NBRC 105917 / EY 4224 / RW1)</name>
    <name type="common">Sphingomonas wittichii</name>
    <dbReference type="NCBI Taxonomy" id="392499"/>
    <lineage>
        <taxon>Bacteria</taxon>
        <taxon>Pseudomonadati</taxon>
        <taxon>Pseudomonadota</taxon>
        <taxon>Alphaproteobacteria</taxon>
        <taxon>Sphingomonadales</taxon>
        <taxon>Sphingomonadaceae</taxon>
        <taxon>Rhizorhabdus</taxon>
    </lineage>
</organism>
<comment type="function">
    <text evidence="1">Catalyzes the conversion of dethiobiotin (DTB) to biotin by the insertion of a sulfur atom into dethiobiotin via a radical-based mechanism.</text>
</comment>
<comment type="catalytic activity">
    <reaction evidence="1">
        <text>(4R,5S)-dethiobiotin + (sulfur carrier)-SH + 2 reduced [2Fe-2S]-[ferredoxin] + 2 S-adenosyl-L-methionine = (sulfur carrier)-H + biotin + 2 5'-deoxyadenosine + 2 L-methionine + 2 oxidized [2Fe-2S]-[ferredoxin]</text>
        <dbReference type="Rhea" id="RHEA:22060"/>
        <dbReference type="Rhea" id="RHEA-COMP:10000"/>
        <dbReference type="Rhea" id="RHEA-COMP:10001"/>
        <dbReference type="Rhea" id="RHEA-COMP:14737"/>
        <dbReference type="Rhea" id="RHEA-COMP:14739"/>
        <dbReference type="ChEBI" id="CHEBI:17319"/>
        <dbReference type="ChEBI" id="CHEBI:29917"/>
        <dbReference type="ChEBI" id="CHEBI:33737"/>
        <dbReference type="ChEBI" id="CHEBI:33738"/>
        <dbReference type="ChEBI" id="CHEBI:57586"/>
        <dbReference type="ChEBI" id="CHEBI:57844"/>
        <dbReference type="ChEBI" id="CHEBI:59789"/>
        <dbReference type="ChEBI" id="CHEBI:64428"/>
        <dbReference type="ChEBI" id="CHEBI:149473"/>
        <dbReference type="EC" id="2.8.1.6"/>
    </reaction>
</comment>
<comment type="cofactor">
    <cofactor evidence="1">
        <name>[4Fe-4S] cluster</name>
        <dbReference type="ChEBI" id="CHEBI:49883"/>
    </cofactor>
    <text evidence="1">Binds 1 [4Fe-4S] cluster. The cluster is coordinated with 3 cysteines and an exchangeable S-adenosyl-L-methionine.</text>
</comment>
<comment type="cofactor">
    <cofactor evidence="1">
        <name>[2Fe-2S] cluster</name>
        <dbReference type="ChEBI" id="CHEBI:190135"/>
    </cofactor>
    <text evidence="1">Binds 1 [2Fe-2S] cluster. The cluster is coordinated with 3 cysteines and 1 arginine.</text>
</comment>
<comment type="pathway">
    <text evidence="1">Cofactor biosynthesis; biotin biosynthesis; biotin from 7,8-diaminononanoate: step 2/2.</text>
</comment>
<comment type="subunit">
    <text evidence="1">Homodimer.</text>
</comment>
<comment type="similarity">
    <text evidence="1">Belongs to the radical SAM superfamily. Biotin synthase family.</text>
</comment>